<evidence type="ECO:0000250" key="1"/>
<evidence type="ECO:0000255" key="2">
    <source>
        <dbReference type="PROSITE-ProRule" id="PRU10039"/>
    </source>
</evidence>
<evidence type="ECO:0000256" key="3">
    <source>
        <dbReference type="SAM" id="MobiDB-lite"/>
    </source>
</evidence>
<evidence type="ECO:0000269" key="4">
    <source>
    </source>
</evidence>
<evidence type="ECO:0000305" key="5"/>
<proteinExistence type="evidence at protein level"/>
<protein>
    <recommendedName>
        <fullName>Fumonisin B1 esterase</fullName>
        <ecNumber>3.1.1.87</ecNumber>
    </recommendedName>
</protein>
<gene>
    <name type="primary">fumD</name>
</gene>
<name>FUMD_SPHMC</name>
<organism>
    <name type="scientific">Sphingopyxis macrogoltabida</name>
    <name type="common">Sphingomonas macrogoltabidus</name>
    <dbReference type="NCBI Taxonomy" id="33050"/>
    <lineage>
        <taxon>Bacteria</taxon>
        <taxon>Pseudomonadati</taxon>
        <taxon>Pseudomonadota</taxon>
        <taxon>Alphaproteobacteria</taxon>
        <taxon>Sphingomonadales</taxon>
        <taxon>Sphingomonadaceae</taxon>
        <taxon>Sphingopyxis</taxon>
    </lineage>
</organism>
<keyword id="KW-0378">Hydrolase</keyword>
<comment type="function">
    <text evidence="4">Involved in degradation of fumonisin B1. Catalyzes the hydrolysis of fumonisin B1 (FB1) to aminopentol (HFB1).</text>
</comment>
<comment type="catalytic activity">
    <reaction evidence="4">
        <text>fumonisin B1 + 2 H2O = 2 tricarballylate + (2S,3S,5R,10R,12S,14S,15R,16R)-2-amino-12,16-dimethylicosane-3,5,10,14,15-pentol + 2 H(+)</text>
        <dbReference type="Rhea" id="RHEA:30363"/>
        <dbReference type="ChEBI" id="CHEBI:15377"/>
        <dbReference type="ChEBI" id="CHEBI:15378"/>
        <dbReference type="ChEBI" id="CHEBI:62517"/>
        <dbReference type="ChEBI" id="CHEBI:62526"/>
        <dbReference type="ChEBI" id="CHEBI:62554"/>
        <dbReference type="EC" id="3.1.1.87"/>
    </reaction>
</comment>
<comment type="similarity">
    <text evidence="5">Belongs to the type-B carboxylesterase/lipase family.</text>
</comment>
<reference key="1">
    <citation type="journal article" date="2010" name="J. Biotechnol.">
        <title>Degradation of fumonisin B1 by the consecutive action of two bacterial enzymes.</title>
        <authorList>
            <person name="Heinl S."/>
            <person name="Hartinger D."/>
            <person name="Thamhesl M."/>
            <person name="Vekiru E."/>
            <person name="Krska R."/>
            <person name="Schatzmayr G."/>
            <person name="Moll W.-D."/>
            <person name="Grabherr R."/>
        </authorList>
    </citation>
    <scope>NUCLEOTIDE SEQUENCE [GENOMIC DNA]</scope>
    <scope>FUNCTION</scope>
    <scope>CATALYTIC ACTIVITY</scope>
    <source>
        <strain>MTA144</strain>
    </source>
</reference>
<dbReference type="EC" id="3.1.1.87"/>
<dbReference type="EMBL" id="FJ426269">
    <property type="protein sequence ID" value="ACS27056.1"/>
    <property type="molecule type" value="Genomic_DNA"/>
</dbReference>
<dbReference type="SMR" id="D2D3B6"/>
<dbReference type="ESTHER" id="sphmc-FumD">
    <property type="family name" value="Carb_B_Bacteria"/>
</dbReference>
<dbReference type="KEGG" id="ag:ACS27056"/>
<dbReference type="BioCyc" id="MetaCyc:MONOMER-16400"/>
<dbReference type="BRENDA" id="3.1.1.87">
    <property type="organism ID" value="8963"/>
</dbReference>
<dbReference type="GO" id="GO:0004104">
    <property type="term" value="F:cholinesterase activity"/>
    <property type="evidence" value="ECO:0007669"/>
    <property type="project" value="InterPro"/>
</dbReference>
<dbReference type="Gene3D" id="3.40.50.1820">
    <property type="entry name" value="alpha/beta hydrolase"/>
    <property type="match status" value="1"/>
</dbReference>
<dbReference type="InterPro" id="IPR029058">
    <property type="entry name" value="AB_hydrolase_fold"/>
</dbReference>
<dbReference type="InterPro" id="IPR002018">
    <property type="entry name" value="CarbesteraseB"/>
</dbReference>
<dbReference type="InterPro" id="IPR019826">
    <property type="entry name" value="Carboxylesterase_B_AS"/>
</dbReference>
<dbReference type="InterPro" id="IPR019819">
    <property type="entry name" value="Carboxylesterase_B_CS"/>
</dbReference>
<dbReference type="InterPro" id="IPR000997">
    <property type="entry name" value="Cholinesterase"/>
</dbReference>
<dbReference type="InterPro" id="IPR050309">
    <property type="entry name" value="Type-B_Carboxylest/Lipase"/>
</dbReference>
<dbReference type="PANTHER" id="PTHR11559">
    <property type="entry name" value="CARBOXYLESTERASE"/>
    <property type="match status" value="1"/>
</dbReference>
<dbReference type="Pfam" id="PF00135">
    <property type="entry name" value="COesterase"/>
    <property type="match status" value="1"/>
</dbReference>
<dbReference type="PRINTS" id="PR00878">
    <property type="entry name" value="CHOLNESTRASE"/>
</dbReference>
<dbReference type="SUPFAM" id="SSF53474">
    <property type="entry name" value="alpha/beta-Hydrolases"/>
    <property type="match status" value="1"/>
</dbReference>
<dbReference type="PROSITE" id="PS00122">
    <property type="entry name" value="CARBOXYLESTERASE_B_1"/>
    <property type="match status" value="1"/>
</dbReference>
<dbReference type="PROSITE" id="PS00941">
    <property type="entry name" value="CARBOXYLESTERASE_B_2"/>
    <property type="match status" value="1"/>
</dbReference>
<feature type="chain" id="PRO_0000418896" description="Fumonisin B1 esterase">
    <location>
        <begin position="1"/>
        <end position="540"/>
    </location>
</feature>
<feature type="region of interest" description="Disordered" evidence="3">
    <location>
        <begin position="521"/>
        <end position="540"/>
    </location>
</feature>
<feature type="active site" description="Acyl-ester intermediate" evidence="2">
    <location>
        <position position="240"/>
    </location>
</feature>
<feature type="active site" description="Charge relay system" evidence="1">
    <location>
        <position position="356"/>
    </location>
</feature>
<feature type="active site" description="Charge relay system" evidence="1">
    <location>
        <position position="448"/>
    </location>
</feature>
<accession>D2D3B6</accession>
<sequence>MKEHQCRGGRASPAAPATWLARISVSRGASAIAWTFMLGATAIPVAAQTDDPKLVRHTQSGAVEGVEGDVETFLGIPFAAPPVGDLRWRPPAPPRAWAGTRDGRRFAPDCIGNERLREGSRAAGTSEDCLYLNIWSPKQVGKGGLPVMIWVYGGGFSGGSGAVPYYDGSALAQKGVVVVTFNYRAGILGFLAHPALSKESPNGVSGNYGLLDMLAAFKWVQNNIREFGGDPNRVTVFGESAGASALGLLLTSPLSESAFNQAILQSPGLARPLATLSESEANGLELGADISALRRADAGELTKIAQSRIPMSRQFTKPRPMGPILDGYVLRTLDVDAFAKGAFRKIPVLVGGNADEGRAFTDRLPVKTVLEYRAYLTEQFGDEADAWERCYPANSDADVPAAVARLFGDSQFNNGIELLSAAFAKWRTPLWRYRFTGIPGAGRRPATHGDEIPYVFANLGPSSVSMFGSLEGGAGASDIKLATEMSAAWVSFAVHGVPDQGTKSHWPRFERRGEIMTFGSQVGSGEGLGVSPSKACQPSK</sequence>